<accession>P0DC51</accession>
<accession>Q8K8J5</accession>
<feature type="chain" id="PRO_0000411413" description="UDP-N-acetylmuramate--L-alanine ligase">
    <location>
        <begin position="1"/>
        <end position="442"/>
    </location>
</feature>
<feature type="binding site" evidence="1">
    <location>
        <begin position="109"/>
        <end position="115"/>
    </location>
    <ligand>
        <name>ATP</name>
        <dbReference type="ChEBI" id="CHEBI:30616"/>
    </ligand>
</feature>
<organism>
    <name type="scientific">Streptococcus pyogenes serotype M3 (strain SSI-1)</name>
    <dbReference type="NCBI Taxonomy" id="193567"/>
    <lineage>
        <taxon>Bacteria</taxon>
        <taxon>Bacillati</taxon>
        <taxon>Bacillota</taxon>
        <taxon>Bacilli</taxon>
        <taxon>Lactobacillales</taxon>
        <taxon>Streptococcaceae</taxon>
        <taxon>Streptococcus</taxon>
    </lineage>
</organism>
<evidence type="ECO:0000255" key="1">
    <source>
        <dbReference type="HAMAP-Rule" id="MF_00046"/>
    </source>
</evidence>
<comment type="function">
    <text evidence="1">Cell wall formation.</text>
</comment>
<comment type="catalytic activity">
    <reaction evidence="1">
        <text>UDP-N-acetyl-alpha-D-muramate + L-alanine + ATP = UDP-N-acetyl-alpha-D-muramoyl-L-alanine + ADP + phosphate + H(+)</text>
        <dbReference type="Rhea" id="RHEA:23372"/>
        <dbReference type="ChEBI" id="CHEBI:15378"/>
        <dbReference type="ChEBI" id="CHEBI:30616"/>
        <dbReference type="ChEBI" id="CHEBI:43474"/>
        <dbReference type="ChEBI" id="CHEBI:57972"/>
        <dbReference type="ChEBI" id="CHEBI:70757"/>
        <dbReference type="ChEBI" id="CHEBI:83898"/>
        <dbReference type="ChEBI" id="CHEBI:456216"/>
        <dbReference type="EC" id="6.3.2.8"/>
    </reaction>
</comment>
<comment type="pathway">
    <text evidence="1">Cell wall biogenesis; peptidoglycan biosynthesis.</text>
</comment>
<comment type="subcellular location">
    <subcellularLocation>
        <location evidence="1">Cytoplasm</location>
    </subcellularLocation>
</comment>
<comment type="similarity">
    <text evidence="1">Belongs to the MurCDEF family.</text>
</comment>
<keyword id="KW-0067">ATP-binding</keyword>
<keyword id="KW-0131">Cell cycle</keyword>
<keyword id="KW-0132">Cell division</keyword>
<keyword id="KW-0133">Cell shape</keyword>
<keyword id="KW-0961">Cell wall biogenesis/degradation</keyword>
<keyword id="KW-0963">Cytoplasm</keyword>
<keyword id="KW-0436">Ligase</keyword>
<keyword id="KW-0547">Nucleotide-binding</keyword>
<keyword id="KW-0573">Peptidoglycan synthesis</keyword>
<dbReference type="EC" id="6.3.2.8" evidence="1"/>
<dbReference type="EMBL" id="BA000034">
    <property type="protein sequence ID" value="BAC64702.1"/>
    <property type="molecule type" value="Genomic_DNA"/>
</dbReference>
<dbReference type="RefSeq" id="WP_011054205.1">
    <property type="nucleotide sequence ID" value="NC_004606.1"/>
</dbReference>
<dbReference type="SMR" id="P0DC51"/>
<dbReference type="KEGG" id="sps:SPs1607"/>
<dbReference type="HOGENOM" id="CLU_028104_1_0_9"/>
<dbReference type="UniPathway" id="UPA00219"/>
<dbReference type="GO" id="GO:0005737">
    <property type="term" value="C:cytoplasm"/>
    <property type="evidence" value="ECO:0007669"/>
    <property type="project" value="UniProtKB-SubCell"/>
</dbReference>
<dbReference type="GO" id="GO:0005524">
    <property type="term" value="F:ATP binding"/>
    <property type="evidence" value="ECO:0007669"/>
    <property type="project" value="UniProtKB-UniRule"/>
</dbReference>
<dbReference type="GO" id="GO:0008763">
    <property type="term" value="F:UDP-N-acetylmuramate-L-alanine ligase activity"/>
    <property type="evidence" value="ECO:0007669"/>
    <property type="project" value="UniProtKB-UniRule"/>
</dbReference>
<dbReference type="GO" id="GO:0051301">
    <property type="term" value="P:cell division"/>
    <property type="evidence" value="ECO:0007669"/>
    <property type="project" value="UniProtKB-KW"/>
</dbReference>
<dbReference type="GO" id="GO:0071555">
    <property type="term" value="P:cell wall organization"/>
    <property type="evidence" value="ECO:0007669"/>
    <property type="project" value="UniProtKB-KW"/>
</dbReference>
<dbReference type="GO" id="GO:0009252">
    <property type="term" value="P:peptidoglycan biosynthetic process"/>
    <property type="evidence" value="ECO:0007669"/>
    <property type="project" value="UniProtKB-UniRule"/>
</dbReference>
<dbReference type="GO" id="GO:0008360">
    <property type="term" value="P:regulation of cell shape"/>
    <property type="evidence" value="ECO:0007669"/>
    <property type="project" value="UniProtKB-KW"/>
</dbReference>
<dbReference type="Gene3D" id="3.90.190.20">
    <property type="entry name" value="Mur ligase, C-terminal domain"/>
    <property type="match status" value="1"/>
</dbReference>
<dbReference type="Gene3D" id="3.40.1190.10">
    <property type="entry name" value="Mur-like, catalytic domain"/>
    <property type="match status" value="1"/>
</dbReference>
<dbReference type="Gene3D" id="3.40.50.720">
    <property type="entry name" value="NAD(P)-binding Rossmann-like Domain"/>
    <property type="match status" value="1"/>
</dbReference>
<dbReference type="HAMAP" id="MF_00046">
    <property type="entry name" value="MurC"/>
    <property type="match status" value="1"/>
</dbReference>
<dbReference type="InterPro" id="IPR036565">
    <property type="entry name" value="Mur-like_cat_sf"/>
</dbReference>
<dbReference type="InterPro" id="IPR004101">
    <property type="entry name" value="Mur_ligase_C"/>
</dbReference>
<dbReference type="InterPro" id="IPR036615">
    <property type="entry name" value="Mur_ligase_C_dom_sf"/>
</dbReference>
<dbReference type="InterPro" id="IPR013221">
    <property type="entry name" value="Mur_ligase_cen"/>
</dbReference>
<dbReference type="InterPro" id="IPR000713">
    <property type="entry name" value="Mur_ligase_N"/>
</dbReference>
<dbReference type="InterPro" id="IPR050061">
    <property type="entry name" value="MurCDEF_pg_biosynth"/>
</dbReference>
<dbReference type="InterPro" id="IPR005758">
    <property type="entry name" value="UDP-N-AcMur_Ala_ligase_MurC"/>
</dbReference>
<dbReference type="NCBIfam" id="TIGR01082">
    <property type="entry name" value="murC"/>
    <property type="match status" value="1"/>
</dbReference>
<dbReference type="PANTHER" id="PTHR43445:SF3">
    <property type="entry name" value="UDP-N-ACETYLMURAMATE--L-ALANINE LIGASE"/>
    <property type="match status" value="1"/>
</dbReference>
<dbReference type="PANTHER" id="PTHR43445">
    <property type="entry name" value="UDP-N-ACETYLMURAMATE--L-ALANINE LIGASE-RELATED"/>
    <property type="match status" value="1"/>
</dbReference>
<dbReference type="Pfam" id="PF01225">
    <property type="entry name" value="Mur_ligase"/>
    <property type="match status" value="1"/>
</dbReference>
<dbReference type="Pfam" id="PF02875">
    <property type="entry name" value="Mur_ligase_C"/>
    <property type="match status" value="1"/>
</dbReference>
<dbReference type="Pfam" id="PF08245">
    <property type="entry name" value="Mur_ligase_M"/>
    <property type="match status" value="1"/>
</dbReference>
<dbReference type="SUPFAM" id="SSF51984">
    <property type="entry name" value="MurCD N-terminal domain"/>
    <property type="match status" value="1"/>
</dbReference>
<dbReference type="SUPFAM" id="SSF53623">
    <property type="entry name" value="MurD-like peptide ligases, catalytic domain"/>
    <property type="match status" value="1"/>
</dbReference>
<dbReference type="SUPFAM" id="SSF53244">
    <property type="entry name" value="MurD-like peptide ligases, peptide-binding domain"/>
    <property type="match status" value="1"/>
</dbReference>
<reference key="1">
    <citation type="journal article" date="2003" name="Genome Res.">
        <title>Genome sequence of an M3 strain of Streptococcus pyogenes reveals a large-scale genomic rearrangement in invasive strains and new insights into phage evolution.</title>
        <authorList>
            <person name="Nakagawa I."/>
            <person name="Kurokawa K."/>
            <person name="Yamashita A."/>
            <person name="Nakata M."/>
            <person name="Tomiyasu Y."/>
            <person name="Okahashi N."/>
            <person name="Kawabata S."/>
            <person name="Yamazaki K."/>
            <person name="Shiba T."/>
            <person name="Yasunaga T."/>
            <person name="Hayashi H."/>
            <person name="Hattori M."/>
            <person name="Hamada S."/>
        </authorList>
    </citation>
    <scope>NUCLEOTIDE SEQUENCE [LARGE SCALE GENOMIC DNA]</scope>
    <source>
        <strain>SSI-1</strain>
    </source>
</reference>
<protein>
    <recommendedName>
        <fullName evidence="1">UDP-N-acetylmuramate--L-alanine ligase</fullName>
        <ecNumber evidence="1">6.3.2.8</ecNumber>
    </recommendedName>
    <alternativeName>
        <fullName evidence="1">UDP-N-acetylmuramoyl-L-alanine synthetase</fullName>
    </alternativeName>
</protein>
<proteinExistence type="inferred from homology"/>
<gene>
    <name evidence="1" type="primary">murC</name>
    <name type="ordered locus">SPs1607</name>
</gene>
<name>MURC_STRPQ</name>
<sequence>MSKTYHFIGIKGSGMSALALMLHQMGHKVQGSDVEKYYFTQRGLEQAGITILPFSEDNITPDMELIVGNAFRENNKEVAYALRHQIPFKRYHDFLGDFMKSFISFAVAGAHGKTSTTGLLSHVLKNITDTSYLIGDGTGRGSANAQYFVFESDEYERHFMPYHPEYSIITNIDFDHPDYFTGIADVRNAFNDYAKQVKKALFVYGEDDELKKIEAPAPIYYYGFEEGNDFIAYDITRTTNGSDFKVKHQGEVIGQFHVPAYGKHNILNATAVIANLFVAGIDMALVADHLKTFSGVKRRFTEKIINDTIIIDDFAHHPTEIVATIDAARQKYPSKEIVAIFQPHTFTRTIALLEDFACALNEADSVYLAQIYGSAREVDKGEVRVEDLAAKIIKPSQVVTVENVSPLLDHDNAVYVFMGAGDIQLYEHSFEELLANLTKNNQ</sequence>